<organism>
    <name type="scientific">Burkholderia pseudomallei (strain 1106a)</name>
    <dbReference type="NCBI Taxonomy" id="357348"/>
    <lineage>
        <taxon>Bacteria</taxon>
        <taxon>Pseudomonadati</taxon>
        <taxon>Pseudomonadota</taxon>
        <taxon>Betaproteobacteria</taxon>
        <taxon>Burkholderiales</taxon>
        <taxon>Burkholderiaceae</taxon>
        <taxon>Burkholderia</taxon>
        <taxon>pseudomallei group</taxon>
    </lineage>
</organism>
<keyword id="KW-0012">Acyltransferase</keyword>
<keyword id="KW-0963">Cytoplasm</keyword>
<keyword id="KW-0808">Transferase</keyword>
<reference key="1">
    <citation type="journal article" date="2010" name="Genome Biol. Evol.">
        <title>Continuing evolution of Burkholderia mallei through genome reduction and large-scale rearrangements.</title>
        <authorList>
            <person name="Losada L."/>
            <person name="Ronning C.M."/>
            <person name="DeShazer D."/>
            <person name="Woods D."/>
            <person name="Fedorova N."/>
            <person name="Kim H.S."/>
            <person name="Shabalina S.A."/>
            <person name="Pearson T.R."/>
            <person name="Brinkac L."/>
            <person name="Tan P."/>
            <person name="Nandi T."/>
            <person name="Crabtree J."/>
            <person name="Badger J."/>
            <person name="Beckstrom-Sternberg S."/>
            <person name="Saqib M."/>
            <person name="Schutzer S.E."/>
            <person name="Keim P."/>
            <person name="Nierman W.C."/>
        </authorList>
    </citation>
    <scope>NUCLEOTIDE SEQUENCE [LARGE SCALE GENOMIC DNA]</scope>
    <source>
        <strain>1106a</strain>
    </source>
</reference>
<comment type="function">
    <text evidence="1">Functions in the N-end rule pathway of protein degradation where it conjugates Leu, Phe and, less efficiently, Met from aminoacyl-tRNAs to the N-termini of proteins containing an N-terminal arginine or lysine.</text>
</comment>
<comment type="catalytic activity">
    <reaction evidence="1">
        <text>N-terminal L-lysyl-[protein] + L-leucyl-tRNA(Leu) = N-terminal L-leucyl-L-lysyl-[protein] + tRNA(Leu) + H(+)</text>
        <dbReference type="Rhea" id="RHEA:12340"/>
        <dbReference type="Rhea" id="RHEA-COMP:9613"/>
        <dbReference type="Rhea" id="RHEA-COMP:9622"/>
        <dbReference type="Rhea" id="RHEA-COMP:12670"/>
        <dbReference type="Rhea" id="RHEA-COMP:12671"/>
        <dbReference type="ChEBI" id="CHEBI:15378"/>
        <dbReference type="ChEBI" id="CHEBI:65249"/>
        <dbReference type="ChEBI" id="CHEBI:78442"/>
        <dbReference type="ChEBI" id="CHEBI:78494"/>
        <dbReference type="ChEBI" id="CHEBI:133043"/>
        <dbReference type="EC" id="2.3.2.6"/>
    </reaction>
</comment>
<comment type="catalytic activity">
    <reaction evidence="1">
        <text>N-terminal L-arginyl-[protein] + L-leucyl-tRNA(Leu) = N-terminal L-leucyl-L-arginyl-[protein] + tRNA(Leu) + H(+)</text>
        <dbReference type="Rhea" id="RHEA:50416"/>
        <dbReference type="Rhea" id="RHEA-COMP:9613"/>
        <dbReference type="Rhea" id="RHEA-COMP:9622"/>
        <dbReference type="Rhea" id="RHEA-COMP:12672"/>
        <dbReference type="Rhea" id="RHEA-COMP:12673"/>
        <dbReference type="ChEBI" id="CHEBI:15378"/>
        <dbReference type="ChEBI" id="CHEBI:64719"/>
        <dbReference type="ChEBI" id="CHEBI:78442"/>
        <dbReference type="ChEBI" id="CHEBI:78494"/>
        <dbReference type="ChEBI" id="CHEBI:133044"/>
        <dbReference type="EC" id="2.3.2.6"/>
    </reaction>
</comment>
<comment type="catalytic activity">
    <reaction evidence="1">
        <text>L-phenylalanyl-tRNA(Phe) + an N-terminal L-alpha-aminoacyl-[protein] = an N-terminal L-phenylalanyl-L-alpha-aminoacyl-[protein] + tRNA(Phe)</text>
        <dbReference type="Rhea" id="RHEA:43632"/>
        <dbReference type="Rhea" id="RHEA-COMP:9668"/>
        <dbReference type="Rhea" id="RHEA-COMP:9699"/>
        <dbReference type="Rhea" id="RHEA-COMP:10636"/>
        <dbReference type="Rhea" id="RHEA-COMP:10637"/>
        <dbReference type="ChEBI" id="CHEBI:78442"/>
        <dbReference type="ChEBI" id="CHEBI:78531"/>
        <dbReference type="ChEBI" id="CHEBI:78597"/>
        <dbReference type="ChEBI" id="CHEBI:83561"/>
        <dbReference type="EC" id="2.3.2.6"/>
    </reaction>
</comment>
<comment type="subcellular location">
    <subcellularLocation>
        <location evidence="1">Cytoplasm</location>
    </subcellularLocation>
</comment>
<comment type="similarity">
    <text evidence="1">Belongs to the L/F-transferase family.</text>
</comment>
<feature type="chain" id="PRO_0000304330" description="Leucyl/phenylalanyl-tRNA--protein transferase">
    <location>
        <begin position="1"/>
        <end position="255"/>
    </location>
</feature>
<protein>
    <recommendedName>
        <fullName evidence="1">Leucyl/phenylalanyl-tRNA--protein transferase</fullName>
        <ecNumber evidence="1">2.3.2.6</ecNumber>
    </recommendedName>
    <alternativeName>
        <fullName evidence="1">L/F-transferase</fullName>
    </alternativeName>
    <alternativeName>
        <fullName evidence="1">Leucyltransferase</fullName>
    </alternativeName>
    <alternativeName>
        <fullName evidence="1">Phenyalanyltransferase</fullName>
    </alternativeName>
</protein>
<accession>A3NUS3</accession>
<name>LFTR_BURP0</name>
<sequence>MVPWLGPDDPFPSVERALGAASGAPGLLAASADLLPSRLIDAYRRGIFPWYSDGQPVLWWSPDPRMILVPAEFRISATFRKTLKRVLREPRWEIRVDCDFAGVMRACAQAPRRGQRGTWITAEIIDAYSSLHRAGDAHSIETWLDGRRVGGLYGVSFGRMFFGESMYAHASDASKIALAALVAHLREHRVEMIDCQQNTSHLASLGGREIARKTFVAHVRRAVAEPPIPWRFDKRVVAGLLGQAASATAADAFDR</sequence>
<proteinExistence type="inferred from homology"/>
<evidence type="ECO:0000255" key="1">
    <source>
        <dbReference type="HAMAP-Rule" id="MF_00688"/>
    </source>
</evidence>
<dbReference type="EC" id="2.3.2.6" evidence="1"/>
<dbReference type="EMBL" id="CP000572">
    <property type="protein sequence ID" value="ABN89004.1"/>
    <property type="molecule type" value="Genomic_DNA"/>
</dbReference>
<dbReference type="RefSeq" id="WP_004521636.1">
    <property type="nucleotide sequence ID" value="NC_009076.1"/>
</dbReference>
<dbReference type="SMR" id="A3NUS3"/>
<dbReference type="GeneID" id="93060131"/>
<dbReference type="KEGG" id="bpl:BURPS1106A_1827"/>
<dbReference type="HOGENOM" id="CLU_075045_0_0_4"/>
<dbReference type="Proteomes" id="UP000006738">
    <property type="component" value="Chromosome I"/>
</dbReference>
<dbReference type="GO" id="GO:0005737">
    <property type="term" value="C:cytoplasm"/>
    <property type="evidence" value="ECO:0007669"/>
    <property type="project" value="UniProtKB-SubCell"/>
</dbReference>
<dbReference type="GO" id="GO:0008914">
    <property type="term" value="F:leucyl-tRNA--protein transferase activity"/>
    <property type="evidence" value="ECO:0007669"/>
    <property type="project" value="UniProtKB-UniRule"/>
</dbReference>
<dbReference type="GO" id="GO:0030163">
    <property type="term" value="P:protein catabolic process"/>
    <property type="evidence" value="ECO:0007669"/>
    <property type="project" value="UniProtKB-UniRule"/>
</dbReference>
<dbReference type="Gene3D" id="3.40.630.70">
    <property type="entry name" value="Leucyl/phenylalanyl-tRNA-protein transferase, C-terminal domain"/>
    <property type="match status" value="1"/>
</dbReference>
<dbReference type="Gene3D" id="3.30.70.3550">
    <property type="entry name" value="Leucyl/phenylalanyl-tRNA-protein transferase, N-terminal domain"/>
    <property type="match status" value="1"/>
</dbReference>
<dbReference type="HAMAP" id="MF_00688">
    <property type="entry name" value="Leu_Phe_trans"/>
    <property type="match status" value="1"/>
</dbReference>
<dbReference type="InterPro" id="IPR016181">
    <property type="entry name" value="Acyl_CoA_acyltransferase"/>
</dbReference>
<dbReference type="InterPro" id="IPR004616">
    <property type="entry name" value="Leu/Phe-tRNA_Trfase"/>
</dbReference>
<dbReference type="InterPro" id="IPR042203">
    <property type="entry name" value="Leu/Phe-tRNA_Trfase_C"/>
</dbReference>
<dbReference type="InterPro" id="IPR042221">
    <property type="entry name" value="Leu/Phe-tRNA_Trfase_N"/>
</dbReference>
<dbReference type="NCBIfam" id="TIGR00667">
    <property type="entry name" value="aat"/>
    <property type="match status" value="1"/>
</dbReference>
<dbReference type="PANTHER" id="PTHR30098">
    <property type="entry name" value="LEUCYL/PHENYLALANYL-TRNA--PROTEIN TRANSFERASE"/>
    <property type="match status" value="1"/>
</dbReference>
<dbReference type="PANTHER" id="PTHR30098:SF2">
    <property type="entry name" value="LEUCYL_PHENYLALANYL-TRNA--PROTEIN TRANSFERASE"/>
    <property type="match status" value="1"/>
</dbReference>
<dbReference type="Pfam" id="PF03588">
    <property type="entry name" value="Leu_Phe_trans"/>
    <property type="match status" value="1"/>
</dbReference>
<dbReference type="SUPFAM" id="SSF55729">
    <property type="entry name" value="Acyl-CoA N-acyltransferases (Nat)"/>
    <property type="match status" value="1"/>
</dbReference>
<gene>
    <name evidence="1" type="primary">aat</name>
    <name type="ordered locus">BURPS1106A_1827</name>
</gene>